<name>TSAD_STRPN</name>
<keyword id="KW-0012">Acyltransferase</keyword>
<keyword id="KW-0963">Cytoplasm</keyword>
<keyword id="KW-0408">Iron</keyword>
<keyword id="KW-0479">Metal-binding</keyword>
<keyword id="KW-1185">Reference proteome</keyword>
<keyword id="KW-0808">Transferase</keyword>
<keyword id="KW-0819">tRNA processing</keyword>
<sequence length="336" mass="36185">MKDRYILAFETSCDETSVAVLKNDDELLSNVIASQIESHKRFGGVVPEVASRHHVEVITACIEEALAEAGITEEDVTAVAVTYGPGLVGALLVGLSAAKAFAWAHGLPLIPVNHMAGHLMAAQSVEPLEFPLLALLVSGGHTELVYVSEAGDYKIVGETRDDAVGEAYDKVGRVMGLTYPAGREIDELAHQGQDIYDFPRAMIKEDNLEFSFSGLKSAFINLHHNAEQKGESLSTEDLCASFQAAVMDILMAKTKKALEKYPVKILVVAGGVAANKGLRERLAAEITDVKVIIPPLRLCGDNAGMIAYASVSEWNKENFAGWDLNAKPSLAFDTME</sequence>
<accession>Q97T27</accession>
<dbReference type="EC" id="2.3.1.234" evidence="1"/>
<dbReference type="EMBL" id="AE005672">
    <property type="protein sequence ID" value="AAK74315.1"/>
    <property type="molecule type" value="Genomic_DNA"/>
</dbReference>
<dbReference type="PIR" id="B95015">
    <property type="entry name" value="B95015"/>
</dbReference>
<dbReference type="RefSeq" id="WP_000655045.1">
    <property type="nucleotide sequence ID" value="NZ_CP155539.1"/>
</dbReference>
<dbReference type="SMR" id="Q97T27"/>
<dbReference type="IntAct" id="Q97T27">
    <property type="interactions" value="1"/>
</dbReference>
<dbReference type="PaxDb" id="170187-SP_0129"/>
<dbReference type="EnsemblBacteria" id="AAK74315">
    <property type="protein sequence ID" value="AAK74315"/>
    <property type="gene ID" value="SP_0129"/>
</dbReference>
<dbReference type="KEGG" id="spn:SP_0129"/>
<dbReference type="eggNOG" id="COG0533">
    <property type="taxonomic scope" value="Bacteria"/>
</dbReference>
<dbReference type="PhylomeDB" id="Q97T27"/>
<dbReference type="BioCyc" id="SPNE170187:G1FZB-136-MONOMER"/>
<dbReference type="Proteomes" id="UP000000585">
    <property type="component" value="Chromosome"/>
</dbReference>
<dbReference type="GO" id="GO:0005737">
    <property type="term" value="C:cytoplasm"/>
    <property type="evidence" value="ECO:0007669"/>
    <property type="project" value="UniProtKB-SubCell"/>
</dbReference>
<dbReference type="GO" id="GO:0005506">
    <property type="term" value="F:iron ion binding"/>
    <property type="evidence" value="ECO:0007669"/>
    <property type="project" value="UniProtKB-UniRule"/>
</dbReference>
<dbReference type="GO" id="GO:0061711">
    <property type="term" value="F:N(6)-L-threonylcarbamoyladenine synthase activity"/>
    <property type="evidence" value="ECO:0007669"/>
    <property type="project" value="UniProtKB-EC"/>
</dbReference>
<dbReference type="GO" id="GO:0002949">
    <property type="term" value="P:tRNA threonylcarbamoyladenosine modification"/>
    <property type="evidence" value="ECO:0007669"/>
    <property type="project" value="UniProtKB-UniRule"/>
</dbReference>
<dbReference type="CDD" id="cd24133">
    <property type="entry name" value="ASKHA_NBD_TsaD_bac"/>
    <property type="match status" value="1"/>
</dbReference>
<dbReference type="FunFam" id="3.30.420.40:FF:000012">
    <property type="entry name" value="tRNA N6-adenosine threonylcarbamoyltransferase"/>
    <property type="match status" value="1"/>
</dbReference>
<dbReference type="FunFam" id="3.30.420.40:FF:000040">
    <property type="entry name" value="tRNA N6-adenosine threonylcarbamoyltransferase"/>
    <property type="match status" value="1"/>
</dbReference>
<dbReference type="Gene3D" id="3.30.420.40">
    <property type="match status" value="2"/>
</dbReference>
<dbReference type="HAMAP" id="MF_01445">
    <property type="entry name" value="TsaD"/>
    <property type="match status" value="1"/>
</dbReference>
<dbReference type="InterPro" id="IPR043129">
    <property type="entry name" value="ATPase_NBD"/>
</dbReference>
<dbReference type="InterPro" id="IPR000905">
    <property type="entry name" value="Gcp-like_dom"/>
</dbReference>
<dbReference type="InterPro" id="IPR017861">
    <property type="entry name" value="KAE1/TsaD"/>
</dbReference>
<dbReference type="InterPro" id="IPR017860">
    <property type="entry name" value="Peptidase_M22_CS"/>
</dbReference>
<dbReference type="InterPro" id="IPR022450">
    <property type="entry name" value="TsaD"/>
</dbReference>
<dbReference type="NCBIfam" id="TIGR00329">
    <property type="entry name" value="gcp_kae1"/>
    <property type="match status" value="1"/>
</dbReference>
<dbReference type="NCBIfam" id="TIGR03723">
    <property type="entry name" value="T6A_TsaD_YgjD"/>
    <property type="match status" value="1"/>
</dbReference>
<dbReference type="PANTHER" id="PTHR11735">
    <property type="entry name" value="TRNA N6-ADENOSINE THREONYLCARBAMOYLTRANSFERASE"/>
    <property type="match status" value="1"/>
</dbReference>
<dbReference type="PANTHER" id="PTHR11735:SF6">
    <property type="entry name" value="TRNA N6-ADENOSINE THREONYLCARBAMOYLTRANSFERASE, MITOCHONDRIAL"/>
    <property type="match status" value="1"/>
</dbReference>
<dbReference type="Pfam" id="PF00814">
    <property type="entry name" value="TsaD"/>
    <property type="match status" value="1"/>
</dbReference>
<dbReference type="PRINTS" id="PR00789">
    <property type="entry name" value="OSIALOPTASE"/>
</dbReference>
<dbReference type="SUPFAM" id="SSF53067">
    <property type="entry name" value="Actin-like ATPase domain"/>
    <property type="match status" value="1"/>
</dbReference>
<dbReference type="PROSITE" id="PS01016">
    <property type="entry name" value="GLYCOPROTEASE"/>
    <property type="match status" value="1"/>
</dbReference>
<proteinExistence type="inferred from homology"/>
<feature type="chain" id="PRO_0000303561" description="tRNA N6-adenosine threonylcarbamoyltransferase">
    <location>
        <begin position="1"/>
        <end position="336"/>
    </location>
</feature>
<feature type="binding site" evidence="1">
    <location>
        <position position="114"/>
    </location>
    <ligand>
        <name>Fe cation</name>
        <dbReference type="ChEBI" id="CHEBI:24875"/>
    </ligand>
</feature>
<feature type="binding site" evidence="1">
    <location>
        <position position="118"/>
    </location>
    <ligand>
        <name>Fe cation</name>
        <dbReference type="ChEBI" id="CHEBI:24875"/>
    </ligand>
</feature>
<feature type="binding site" evidence="1">
    <location>
        <begin position="136"/>
        <end position="140"/>
    </location>
    <ligand>
        <name>substrate</name>
    </ligand>
</feature>
<feature type="binding site" evidence="1">
    <location>
        <position position="169"/>
    </location>
    <ligand>
        <name>substrate</name>
    </ligand>
</feature>
<feature type="binding site" evidence="1">
    <location>
        <position position="182"/>
    </location>
    <ligand>
        <name>substrate</name>
    </ligand>
</feature>
<feature type="binding site" evidence="1">
    <location>
        <position position="186"/>
    </location>
    <ligand>
        <name>substrate</name>
    </ligand>
</feature>
<feature type="binding site" evidence="1">
    <location>
        <position position="275"/>
    </location>
    <ligand>
        <name>substrate</name>
    </ligand>
</feature>
<feature type="binding site" evidence="1">
    <location>
        <position position="301"/>
    </location>
    <ligand>
        <name>Fe cation</name>
        <dbReference type="ChEBI" id="CHEBI:24875"/>
    </ligand>
</feature>
<evidence type="ECO:0000255" key="1">
    <source>
        <dbReference type="HAMAP-Rule" id="MF_01445"/>
    </source>
</evidence>
<protein>
    <recommendedName>
        <fullName evidence="1">tRNA N6-adenosine threonylcarbamoyltransferase</fullName>
        <ecNumber evidence="1">2.3.1.234</ecNumber>
    </recommendedName>
    <alternativeName>
        <fullName evidence="1">N6-L-threonylcarbamoyladenine synthase</fullName>
        <shortName evidence="1">t(6)A synthase</shortName>
    </alternativeName>
    <alternativeName>
        <fullName evidence="1">t(6)A37 threonylcarbamoyladenosine biosynthesis protein TsaD</fullName>
    </alternativeName>
    <alternativeName>
        <fullName evidence="1">tRNA threonylcarbamoyladenosine biosynthesis protein TsaD</fullName>
    </alternativeName>
</protein>
<reference key="1">
    <citation type="journal article" date="2001" name="Science">
        <title>Complete genome sequence of a virulent isolate of Streptococcus pneumoniae.</title>
        <authorList>
            <person name="Tettelin H."/>
            <person name="Nelson K.E."/>
            <person name="Paulsen I.T."/>
            <person name="Eisen J.A."/>
            <person name="Read T.D."/>
            <person name="Peterson S.N."/>
            <person name="Heidelberg J.F."/>
            <person name="DeBoy R.T."/>
            <person name="Haft D.H."/>
            <person name="Dodson R.J."/>
            <person name="Durkin A.S."/>
            <person name="Gwinn M.L."/>
            <person name="Kolonay J.F."/>
            <person name="Nelson W.C."/>
            <person name="Peterson J.D."/>
            <person name="Umayam L.A."/>
            <person name="White O."/>
            <person name="Salzberg S.L."/>
            <person name="Lewis M.R."/>
            <person name="Radune D."/>
            <person name="Holtzapple E.K."/>
            <person name="Khouri H.M."/>
            <person name="Wolf A.M."/>
            <person name="Utterback T.R."/>
            <person name="Hansen C.L."/>
            <person name="McDonald L.A."/>
            <person name="Feldblyum T.V."/>
            <person name="Angiuoli S.V."/>
            <person name="Dickinson T."/>
            <person name="Hickey E.K."/>
            <person name="Holt I.E."/>
            <person name="Loftus B.J."/>
            <person name="Yang F."/>
            <person name="Smith H.O."/>
            <person name="Venter J.C."/>
            <person name="Dougherty B.A."/>
            <person name="Morrison D.A."/>
            <person name="Hollingshead S.K."/>
            <person name="Fraser C.M."/>
        </authorList>
    </citation>
    <scope>NUCLEOTIDE SEQUENCE [LARGE SCALE GENOMIC DNA]</scope>
    <source>
        <strain>ATCC BAA-334 / TIGR4</strain>
    </source>
</reference>
<gene>
    <name evidence="1" type="primary">tsaD</name>
    <name type="synonym">gcp</name>
    <name type="ordered locus">SP_0129</name>
</gene>
<comment type="function">
    <text evidence="1">Required for the formation of a threonylcarbamoyl group on adenosine at position 37 (t(6)A37) in tRNAs that read codons beginning with adenine. Is involved in the transfer of the threonylcarbamoyl moiety of threonylcarbamoyl-AMP (TC-AMP) to the N6 group of A37, together with TsaE and TsaB. TsaD likely plays a direct catalytic role in this reaction.</text>
</comment>
<comment type="catalytic activity">
    <reaction evidence="1">
        <text>L-threonylcarbamoyladenylate + adenosine(37) in tRNA = N(6)-L-threonylcarbamoyladenosine(37) in tRNA + AMP + H(+)</text>
        <dbReference type="Rhea" id="RHEA:37059"/>
        <dbReference type="Rhea" id="RHEA-COMP:10162"/>
        <dbReference type="Rhea" id="RHEA-COMP:10163"/>
        <dbReference type="ChEBI" id="CHEBI:15378"/>
        <dbReference type="ChEBI" id="CHEBI:73682"/>
        <dbReference type="ChEBI" id="CHEBI:74411"/>
        <dbReference type="ChEBI" id="CHEBI:74418"/>
        <dbReference type="ChEBI" id="CHEBI:456215"/>
        <dbReference type="EC" id="2.3.1.234"/>
    </reaction>
</comment>
<comment type="cofactor">
    <cofactor evidence="1">
        <name>Fe(2+)</name>
        <dbReference type="ChEBI" id="CHEBI:29033"/>
    </cofactor>
    <text evidence="1">Binds 1 Fe(2+) ion per subunit.</text>
</comment>
<comment type="subcellular location">
    <subcellularLocation>
        <location evidence="1">Cytoplasm</location>
    </subcellularLocation>
</comment>
<comment type="similarity">
    <text evidence="1">Belongs to the KAE1 / TsaD family.</text>
</comment>
<organism>
    <name type="scientific">Streptococcus pneumoniae serotype 4 (strain ATCC BAA-334 / TIGR4)</name>
    <dbReference type="NCBI Taxonomy" id="170187"/>
    <lineage>
        <taxon>Bacteria</taxon>
        <taxon>Bacillati</taxon>
        <taxon>Bacillota</taxon>
        <taxon>Bacilli</taxon>
        <taxon>Lactobacillales</taxon>
        <taxon>Streptococcaceae</taxon>
        <taxon>Streptococcus</taxon>
    </lineage>
</organism>